<protein>
    <recommendedName>
        <fullName>Uncharacterized protein MT2361</fullName>
    </recommendedName>
</protein>
<organism>
    <name type="scientific">Mycobacterium tuberculosis (strain CDC 1551 / Oshkosh)</name>
    <dbReference type="NCBI Taxonomy" id="83331"/>
    <lineage>
        <taxon>Bacteria</taxon>
        <taxon>Bacillati</taxon>
        <taxon>Actinomycetota</taxon>
        <taxon>Actinomycetes</taxon>
        <taxon>Mycobacteriales</taxon>
        <taxon>Mycobacteriaceae</taxon>
        <taxon>Mycobacterium</taxon>
        <taxon>Mycobacterium tuberculosis complex</taxon>
    </lineage>
</organism>
<proteinExistence type="predicted"/>
<sequence length="69" mass="7411">MSHDIATEEADDGALDRCVLCDLTGKRVDVKEATCTGRPATTFEQAFAVERDAGFDDFLHGPVGPRSTP</sequence>
<gene>
    <name type="ordered locus">MT2361</name>
</gene>
<feature type="chain" id="PRO_0000427499" description="Uncharacterized protein MT2361">
    <location>
        <begin position="1"/>
        <end position="69"/>
    </location>
</feature>
<accession>P9WLD2</accession>
<accession>L0TC44</accession>
<accession>P64985</accession>
<accession>Q50661</accession>
<name>Y2304_MYCTO</name>
<dbReference type="EMBL" id="AE000516">
    <property type="protein sequence ID" value="AAK46646.1"/>
    <property type="molecule type" value="Genomic_DNA"/>
</dbReference>
<dbReference type="PIR" id="D70734">
    <property type="entry name" value="D70734"/>
</dbReference>
<dbReference type="RefSeq" id="WP_003411870.1">
    <property type="nucleotide sequence ID" value="NZ_KK341227.1"/>
</dbReference>
<dbReference type="KEGG" id="mtc:MT2361"/>
<dbReference type="PATRIC" id="fig|83331.31.peg.2541"/>
<dbReference type="HOGENOM" id="CLU_2771529_0_0_11"/>
<dbReference type="Proteomes" id="UP000001020">
    <property type="component" value="Chromosome"/>
</dbReference>
<reference key="1">
    <citation type="journal article" date="2002" name="J. Bacteriol.">
        <title>Whole-genome comparison of Mycobacterium tuberculosis clinical and laboratory strains.</title>
        <authorList>
            <person name="Fleischmann R.D."/>
            <person name="Alland D."/>
            <person name="Eisen J.A."/>
            <person name="Carpenter L."/>
            <person name="White O."/>
            <person name="Peterson J.D."/>
            <person name="DeBoy R.T."/>
            <person name="Dodson R.J."/>
            <person name="Gwinn M.L."/>
            <person name="Haft D.H."/>
            <person name="Hickey E.K."/>
            <person name="Kolonay J.F."/>
            <person name="Nelson W.C."/>
            <person name="Umayam L.A."/>
            <person name="Ermolaeva M.D."/>
            <person name="Salzberg S.L."/>
            <person name="Delcher A."/>
            <person name="Utterback T.R."/>
            <person name="Weidman J.F."/>
            <person name="Khouri H.M."/>
            <person name="Gill J."/>
            <person name="Mikula A."/>
            <person name="Bishai W."/>
            <person name="Jacobs W.R. Jr."/>
            <person name="Venter J.C."/>
            <person name="Fraser C.M."/>
        </authorList>
    </citation>
    <scope>NUCLEOTIDE SEQUENCE [LARGE SCALE GENOMIC DNA]</scope>
    <source>
        <strain>CDC 1551 / Oshkosh</strain>
    </source>
</reference>
<keyword id="KW-1185">Reference proteome</keyword>